<keyword id="KW-0067">ATP-binding</keyword>
<keyword id="KW-0460">Magnesium</keyword>
<keyword id="KW-0464">Manganese</keyword>
<keyword id="KW-0479">Metal-binding</keyword>
<keyword id="KW-0547">Nucleotide-binding</keyword>
<keyword id="KW-0548">Nucleotidyltransferase</keyword>
<keyword id="KW-0808">Transferase</keyword>
<proteinExistence type="inferred from homology"/>
<comment type="function">
    <text evidence="1">Nucleotidyltransferase involved in the post-translational modification of proteins. It can catalyze the addition of adenosine monophosphate (AMP) or uridine monophosphate (UMP) to a protein, resulting in modifications known as AMPylation and UMPylation.</text>
</comment>
<comment type="catalytic activity">
    <reaction evidence="1">
        <text>L-seryl-[protein] + ATP = 3-O-(5'-adenylyl)-L-seryl-[protein] + diphosphate</text>
        <dbReference type="Rhea" id="RHEA:58120"/>
        <dbReference type="Rhea" id="RHEA-COMP:9863"/>
        <dbReference type="Rhea" id="RHEA-COMP:15073"/>
        <dbReference type="ChEBI" id="CHEBI:29999"/>
        <dbReference type="ChEBI" id="CHEBI:30616"/>
        <dbReference type="ChEBI" id="CHEBI:33019"/>
        <dbReference type="ChEBI" id="CHEBI:142516"/>
        <dbReference type="EC" id="2.7.7.108"/>
    </reaction>
</comment>
<comment type="catalytic activity">
    <reaction evidence="1">
        <text>L-threonyl-[protein] + ATP = 3-O-(5'-adenylyl)-L-threonyl-[protein] + diphosphate</text>
        <dbReference type="Rhea" id="RHEA:54292"/>
        <dbReference type="Rhea" id="RHEA-COMP:11060"/>
        <dbReference type="Rhea" id="RHEA-COMP:13847"/>
        <dbReference type="ChEBI" id="CHEBI:30013"/>
        <dbReference type="ChEBI" id="CHEBI:30616"/>
        <dbReference type="ChEBI" id="CHEBI:33019"/>
        <dbReference type="ChEBI" id="CHEBI:138113"/>
        <dbReference type="EC" id="2.7.7.108"/>
    </reaction>
</comment>
<comment type="catalytic activity">
    <reaction evidence="1">
        <text>L-tyrosyl-[protein] + ATP = O-(5'-adenylyl)-L-tyrosyl-[protein] + diphosphate</text>
        <dbReference type="Rhea" id="RHEA:54288"/>
        <dbReference type="Rhea" id="RHEA-COMP:10136"/>
        <dbReference type="Rhea" id="RHEA-COMP:13846"/>
        <dbReference type="ChEBI" id="CHEBI:30616"/>
        <dbReference type="ChEBI" id="CHEBI:33019"/>
        <dbReference type="ChEBI" id="CHEBI:46858"/>
        <dbReference type="ChEBI" id="CHEBI:83624"/>
        <dbReference type="EC" id="2.7.7.108"/>
    </reaction>
</comment>
<comment type="catalytic activity">
    <reaction evidence="1">
        <text>L-histidyl-[protein] + UTP = N(tele)-(5'-uridylyl)-L-histidyl-[protein] + diphosphate</text>
        <dbReference type="Rhea" id="RHEA:83891"/>
        <dbReference type="Rhea" id="RHEA-COMP:9745"/>
        <dbReference type="Rhea" id="RHEA-COMP:20239"/>
        <dbReference type="ChEBI" id="CHEBI:29979"/>
        <dbReference type="ChEBI" id="CHEBI:33019"/>
        <dbReference type="ChEBI" id="CHEBI:46398"/>
        <dbReference type="ChEBI" id="CHEBI:233474"/>
    </reaction>
</comment>
<comment type="catalytic activity">
    <reaction evidence="1">
        <text>L-seryl-[protein] + UTP = O-(5'-uridylyl)-L-seryl-[protein] + diphosphate</text>
        <dbReference type="Rhea" id="RHEA:64604"/>
        <dbReference type="Rhea" id="RHEA-COMP:9863"/>
        <dbReference type="Rhea" id="RHEA-COMP:16635"/>
        <dbReference type="ChEBI" id="CHEBI:29999"/>
        <dbReference type="ChEBI" id="CHEBI:33019"/>
        <dbReference type="ChEBI" id="CHEBI:46398"/>
        <dbReference type="ChEBI" id="CHEBI:156051"/>
    </reaction>
</comment>
<comment type="catalytic activity">
    <reaction evidence="1">
        <text>L-tyrosyl-[protein] + UTP = O-(5'-uridylyl)-L-tyrosyl-[protein] + diphosphate</text>
        <dbReference type="Rhea" id="RHEA:83887"/>
        <dbReference type="Rhea" id="RHEA-COMP:10136"/>
        <dbReference type="Rhea" id="RHEA-COMP:20238"/>
        <dbReference type="ChEBI" id="CHEBI:33019"/>
        <dbReference type="ChEBI" id="CHEBI:46398"/>
        <dbReference type="ChEBI" id="CHEBI:46858"/>
        <dbReference type="ChEBI" id="CHEBI:90602"/>
    </reaction>
</comment>
<comment type="cofactor">
    <cofactor evidence="1">
        <name>Mg(2+)</name>
        <dbReference type="ChEBI" id="CHEBI:18420"/>
    </cofactor>
    <cofactor evidence="1">
        <name>Mn(2+)</name>
        <dbReference type="ChEBI" id="CHEBI:29035"/>
    </cofactor>
</comment>
<comment type="similarity">
    <text evidence="1">Belongs to the SELO family.</text>
</comment>
<dbReference type="EC" id="2.7.7.-" evidence="1"/>
<dbReference type="EC" id="2.7.7.108" evidence="1"/>
<dbReference type="EMBL" id="CP000050">
    <property type="protein sequence ID" value="AAY48894.1"/>
    <property type="molecule type" value="Genomic_DNA"/>
</dbReference>
<dbReference type="RefSeq" id="WP_011037428.1">
    <property type="nucleotide sequence ID" value="NZ_CP155948.1"/>
</dbReference>
<dbReference type="SMR" id="Q4UVM9"/>
<dbReference type="KEGG" id="xcb:XC_1831"/>
<dbReference type="HOGENOM" id="CLU_010245_4_0_6"/>
<dbReference type="Proteomes" id="UP000000420">
    <property type="component" value="Chromosome"/>
</dbReference>
<dbReference type="GO" id="GO:0070733">
    <property type="term" value="F:AMPylase activity"/>
    <property type="evidence" value="ECO:0007669"/>
    <property type="project" value="RHEA"/>
</dbReference>
<dbReference type="GO" id="GO:0005524">
    <property type="term" value="F:ATP binding"/>
    <property type="evidence" value="ECO:0007669"/>
    <property type="project" value="UniProtKB-UniRule"/>
</dbReference>
<dbReference type="GO" id="GO:0000287">
    <property type="term" value="F:magnesium ion binding"/>
    <property type="evidence" value="ECO:0007669"/>
    <property type="project" value="UniProtKB-UniRule"/>
</dbReference>
<dbReference type="HAMAP" id="MF_00692">
    <property type="entry name" value="YdiU_SelO"/>
    <property type="match status" value="1"/>
</dbReference>
<dbReference type="InterPro" id="IPR003846">
    <property type="entry name" value="SelO"/>
</dbReference>
<dbReference type="NCBIfam" id="NF000658">
    <property type="entry name" value="PRK00029.1"/>
    <property type="match status" value="1"/>
</dbReference>
<dbReference type="PANTHER" id="PTHR32057">
    <property type="entry name" value="PROTEIN ADENYLYLTRANSFERASE SELO, MITOCHONDRIAL"/>
    <property type="match status" value="1"/>
</dbReference>
<dbReference type="PANTHER" id="PTHR32057:SF14">
    <property type="entry name" value="PROTEIN ADENYLYLTRANSFERASE SELO, MITOCHONDRIAL"/>
    <property type="match status" value="1"/>
</dbReference>
<dbReference type="Pfam" id="PF02696">
    <property type="entry name" value="SelO"/>
    <property type="match status" value="1"/>
</dbReference>
<feature type="chain" id="PRO_0000271879" description="Protein nucleotidyltransferase YdiU">
    <location>
        <begin position="1"/>
        <end position="518"/>
    </location>
</feature>
<feature type="region of interest" description="Disordered" evidence="2">
    <location>
        <begin position="1"/>
        <end position="22"/>
    </location>
</feature>
<feature type="active site" description="Proton acceptor" evidence="1">
    <location>
        <position position="270"/>
    </location>
</feature>
<feature type="binding site" evidence="1">
    <location>
        <position position="100"/>
    </location>
    <ligand>
        <name>ATP</name>
        <dbReference type="ChEBI" id="CHEBI:30616"/>
    </ligand>
</feature>
<feature type="binding site" evidence="1">
    <location>
        <position position="102"/>
    </location>
    <ligand>
        <name>ATP</name>
        <dbReference type="ChEBI" id="CHEBI:30616"/>
    </ligand>
</feature>
<feature type="binding site" evidence="1">
    <location>
        <position position="103"/>
    </location>
    <ligand>
        <name>ATP</name>
        <dbReference type="ChEBI" id="CHEBI:30616"/>
    </ligand>
</feature>
<feature type="binding site" evidence="1">
    <location>
        <position position="123"/>
    </location>
    <ligand>
        <name>ATP</name>
        <dbReference type="ChEBI" id="CHEBI:30616"/>
    </ligand>
</feature>
<feature type="binding site" evidence="1">
    <location>
        <position position="135"/>
    </location>
    <ligand>
        <name>ATP</name>
        <dbReference type="ChEBI" id="CHEBI:30616"/>
    </ligand>
</feature>
<feature type="binding site" evidence="1">
    <location>
        <position position="136"/>
    </location>
    <ligand>
        <name>ATP</name>
        <dbReference type="ChEBI" id="CHEBI:30616"/>
    </ligand>
</feature>
<feature type="binding site" evidence="1">
    <location>
        <position position="193"/>
    </location>
    <ligand>
        <name>ATP</name>
        <dbReference type="ChEBI" id="CHEBI:30616"/>
    </ligand>
</feature>
<feature type="binding site" evidence="1">
    <location>
        <position position="200"/>
    </location>
    <ligand>
        <name>ATP</name>
        <dbReference type="ChEBI" id="CHEBI:30616"/>
    </ligand>
</feature>
<feature type="binding site" evidence="1">
    <location>
        <position position="271"/>
    </location>
    <ligand>
        <name>Mg(2+)</name>
        <dbReference type="ChEBI" id="CHEBI:18420"/>
    </ligand>
</feature>
<feature type="binding site" evidence="1">
    <location>
        <position position="280"/>
    </location>
    <ligand>
        <name>ATP</name>
        <dbReference type="ChEBI" id="CHEBI:30616"/>
    </ligand>
</feature>
<feature type="binding site" evidence="1">
    <location>
        <position position="280"/>
    </location>
    <ligand>
        <name>Mg(2+)</name>
        <dbReference type="ChEBI" id="CHEBI:18420"/>
    </ligand>
</feature>
<gene>
    <name evidence="1" type="primary">ydiU</name>
    <name evidence="1" type="synonym">selO</name>
    <name type="ordered locus">XC_1831</name>
</gene>
<evidence type="ECO:0000255" key="1">
    <source>
        <dbReference type="HAMAP-Rule" id="MF_00692"/>
    </source>
</evidence>
<evidence type="ECO:0000256" key="2">
    <source>
        <dbReference type="SAM" id="MobiDB-lite"/>
    </source>
</evidence>
<reference key="1">
    <citation type="journal article" date="2005" name="Genome Res.">
        <title>Comparative and functional genomic analyses of the pathogenicity of phytopathogen Xanthomonas campestris pv. campestris.</title>
        <authorList>
            <person name="Qian W."/>
            <person name="Jia Y."/>
            <person name="Ren S.-X."/>
            <person name="He Y.-Q."/>
            <person name="Feng J.-X."/>
            <person name="Lu L.-F."/>
            <person name="Sun Q."/>
            <person name="Ying G."/>
            <person name="Tang D.-J."/>
            <person name="Tang H."/>
            <person name="Wu W."/>
            <person name="Hao P."/>
            <person name="Wang L."/>
            <person name="Jiang B.-L."/>
            <person name="Zeng S."/>
            <person name="Gu W.-Y."/>
            <person name="Lu G."/>
            <person name="Rong L."/>
            <person name="Tian Y."/>
            <person name="Yao Z."/>
            <person name="Fu G."/>
            <person name="Chen B."/>
            <person name="Fang R."/>
            <person name="Qiang B."/>
            <person name="Chen Z."/>
            <person name="Zhao G.-P."/>
            <person name="Tang J.-L."/>
            <person name="He C."/>
        </authorList>
    </citation>
    <scope>NUCLEOTIDE SEQUENCE [LARGE SCALE GENOMIC DNA]</scope>
    <source>
        <strain>8004</strain>
    </source>
</reference>
<accession>Q4UVM9</accession>
<sequence>MTHLQFDNRLRAELPGDPEEGPRRREVLAAWSAVQPTPVAAPTLLAYSADVAQRLGLRAEDLASPRFAEVFGGNALYPGMQPWAVNYGGHQFGHWAGQLGDGRAISLGEAIGVDGGRYELQLKGAGPTPYSRGADGRAVLRSSIREFLCSEAMHYLGVPTTRALSLVGTGDAVVRDMFYDGHPRREPGAIVCRVAPSFIRFGNFELPAARGDVDLLRQWVDFTLARDFPDLPGSGEDRIASWLGQVCERTAVMVAHWMRVGFVHGVMNTDNMSILGLTIDYGPYGWVDDYDPDWTPNTTDAQGRRYRFGTQPQVAYWNLGRLAQALSPLFGDAAPLQAGLDQFRDTYLACDRRDTAAKLGLAECQDEDLHLIDDLRALMREAEMDMTLTFRGLVDLSPQQPDASVLREAFYDETKRAAQAPALGAWLQRYAARCLQDGASDAVRASRMRAANPRYVLRNYLAQQAIDQAEQGDLSGVHALLEVMQRPYDDQPRRESFAAKRPDWARDRAGCSMLSCSS</sequence>
<name>SELO_XANC8</name>
<protein>
    <recommendedName>
        <fullName evidence="1">Protein nucleotidyltransferase YdiU</fullName>
        <ecNumber evidence="1">2.7.7.-</ecNumber>
    </recommendedName>
    <alternativeName>
        <fullName evidence="1">Protein adenylyltransferase YdiU</fullName>
        <ecNumber evidence="1">2.7.7.108</ecNumber>
    </alternativeName>
    <alternativeName>
        <fullName evidence="1">Protein uridylyltransferase YdiU</fullName>
        <ecNumber evidence="1">2.7.7.-</ecNumber>
    </alternativeName>
</protein>
<organism>
    <name type="scientific">Xanthomonas campestris pv. campestris (strain 8004)</name>
    <dbReference type="NCBI Taxonomy" id="314565"/>
    <lineage>
        <taxon>Bacteria</taxon>
        <taxon>Pseudomonadati</taxon>
        <taxon>Pseudomonadota</taxon>
        <taxon>Gammaproteobacteria</taxon>
        <taxon>Lysobacterales</taxon>
        <taxon>Lysobacteraceae</taxon>
        <taxon>Xanthomonas</taxon>
    </lineage>
</organism>